<feature type="initiator methionine" description="Removed" evidence="1">
    <location>
        <position position="1"/>
    </location>
</feature>
<feature type="chain" id="PRO_0000248043" description="ATP-binding cassette sub-family F member 3">
    <location>
        <begin position="2"/>
        <end position="709"/>
    </location>
</feature>
<feature type="domain" description="ABC transporter 1" evidence="2">
    <location>
        <begin position="178"/>
        <end position="424"/>
    </location>
</feature>
<feature type="domain" description="ABC transporter 2" evidence="2">
    <location>
        <begin position="492"/>
        <end position="707"/>
    </location>
</feature>
<feature type="region of interest" description="Disordered" evidence="3">
    <location>
        <begin position="129"/>
        <end position="171"/>
    </location>
</feature>
<feature type="compositionally biased region" description="Basic and acidic residues" evidence="3">
    <location>
        <begin position="129"/>
        <end position="143"/>
    </location>
</feature>
<feature type="compositionally biased region" description="Basic and acidic residues" evidence="3">
    <location>
        <begin position="161"/>
        <end position="171"/>
    </location>
</feature>
<feature type="binding site" evidence="2">
    <location>
        <begin position="210"/>
        <end position="217"/>
    </location>
    <ligand>
        <name>ATP</name>
        <dbReference type="ChEBI" id="CHEBI:30616"/>
        <label>1</label>
    </ligand>
</feature>
<feature type="binding site" evidence="2">
    <location>
        <begin position="525"/>
        <end position="532"/>
    </location>
    <ligand>
        <name>ATP</name>
        <dbReference type="ChEBI" id="CHEBI:30616"/>
        <label>2</label>
    </ligand>
</feature>
<feature type="modified residue" description="N-acetylalanine" evidence="1">
    <location>
        <position position="2"/>
    </location>
</feature>
<feature type="modified residue" description="Phosphoserine" evidence="1">
    <location>
        <position position="83"/>
    </location>
</feature>
<feature type="modified residue" description="Phosphoserine" evidence="1">
    <location>
        <position position="155"/>
    </location>
</feature>
<feature type="modified residue" description="Phosphoserine" evidence="1">
    <location>
        <position position="157"/>
    </location>
</feature>
<feature type="modified residue" description="Phosphoserine" evidence="1">
    <location>
        <position position="161"/>
    </location>
</feature>
<feature type="modified residue" description="Phosphoserine" evidence="1">
    <location>
        <position position="283"/>
    </location>
</feature>
<feature type="sequence conflict" description="In Ref. 2; AAF31421." evidence="5" ref="2">
    <original>RE</original>
    <variation>SG</variation>
    <location>
        <begin position="705"/>
        <end position="706"/>
    </location>
</feature>
<dbReference type="EMBL" id="BC032923">
    <property type="protein sequence ID" value="AAH32923.1"/>
    <property type="molecule type" value="mRNA"/>
</dbReference>
<dbReference type="EMBL" id="AF213381">
    <property type="protein sequence ID" value="AAF31421.1"/>
    <property type="status" value="ALT_FRAME"/>
    <property type="molecule type" value="mRNA"/>
</dbReference>
<dbReference type="CCDS" id="CCDS28049.1"/>
<dbReference type="RefSeq" id="NP_038880.1">
    <property type="nucleotide sequence ID" value="NM_013852.2"/>
</dbReference>
<dbReference type="SMR" id="Q8K268"/>
<dbReference type="BioGRID" id="205213">
    <property type="interactions" value="3"/>
</dbReference>
<dbReference type="FunCoup" id="Q8K268">
    <property type="interactions" value="3176"/>
</dbReference>
<dbReference type="IntAct" id="Q8K268">
    <property type="interactions" value="2"/>
</dbReference>
<dbReference type="MINT" id="Q8K268"/>
<dbReference type="STRING" id="10090.ENSMUSP00000003319"/>
<dbReference type="GlyGen" id="Q8K268">
    <property type="glycosylation" value="2 sites, 1 N-linked glycan (1 site), 1 O-linked glycan (1 site)"/>
</dbReference>
<dbReference type="iPTMnet" id="Q8K268"/>
<dbReference type="PhosphoSitePlus" id="Q8K268"/>
<dbReference type="SwissPalm" id="Q8K268"/>
<dbReference type="PaxDb" id="10090-ENSMUSP00000003319"/>
<dbReference type="PeptideAtlas" id="Q8K268"/>
<dbReference type="ProteomicsDB" id="285817"/>
<dbReference type="Pumba" id="Q8K268"/>
<dbReference type="Antibodypedia" id="33796">
    <property type="antibodies" value="193 antibodies from 29 providers"/>
</dbReference>
<dbReference type="DNASU" id="27406"/>
<dbReference type="Ensembl" id="ENSMUST00000003319.6">
    <property type="protein sequence ID" value="ENSMUSP00000003319.6"/>
    <property type="gene ID" value="ENSMUSG00000003234.17"/>
</dbReference>
<dbReference type="GeneID" id="27406"/>
<dbReference type="KEGG" id="mmu:27406"/>
<dbReference type="UCSC" id="uc007ypz.1">
    <property type="organism name" value="mouse"/>
</dbReference>
<dbReference type="AGR" id="MGI:1351656"/>
<dbReference type="CTD" id="55324"/>
<dbReference type="MGI" id="MGI:1351656">
    <property type="gene designation" value="Abcf3"/>
</dbReference>
<dbReference type="VEuPathDB" id="HostDB:ENSMUSG00000003234"/>
<dbReference type="eggNOG" id="KOG0062">
    <property type="taxonomic scope" value="Eukaryota"/>
</dbReference>
<dbReference type="GeneTree" id="ENSGT00940000155604"/>
<dbReference type="HOGENOM" id="CLU_000604_36_6_1"/>
<dbReference type="InParanoid" id="Q8K268"/>
<dbReference type="OMA" id="CTHIADI"/>
<dbReference type="OrthoDB" id="2110130at2759"/>
<dbReference type="PhylomeDB" id="Q8K268"/>
<dbReference type="TreeFam" id="TF105209"/>
<dbReference type="BioGRID-ORCS" id="27406">
    <property type="hits" value="3 hits in 77 CRISPR screens"/>
</dbReference>
<dbReference type="PRO" id="PR:Q8K268"/>
<dbReference type="Proteomes" id="UP000000589">
    <property type="component" value="Chromosome 16"/>
</dbReference>
<dbReference type="RNAct" id="Q8K268">
    <property type="molecule type" value="protein"/>
</dbReference>
<dbReference type="Bgee" id="ENSMUSG00000003234">
    <property type="expression patterns" value="Expressed in mesenchyme of tongue and 259 other cell types or tissues"/>
</dbReference>
<dbReference type="ExpressionAtlas" id="Q8K268">
    <property type="expression patterns" value="baseline and differential"/>
</dbReference>
<dbReference type="GO" id="GO:0005524">
    <property type="term" value="F:ATP binding"/>
    <property type="evidence" value="ECO:0007669"/>
    <property type="project" value="UniProtKB-KW"/>
</dbReference>
<dbReference type="GO" id="GO:0016887">
    <property type="term" value="F:ATP hydrolysis activity"/>
    <property type="evidence" value="ECO:0007669"/>
    <property type="project" value="InterPro"/>
</dbReference>
<dbReference type="GO" id="GO:0051607">
    <property type="term" value="P:defense response to virus"/>
    <property type="evidence" value="ECO:0007669"/>
    <property type="project" value="UniProtKB-KW"/>
</dbReference>
<dbReference type="CDD" id="cd03221">
    <property type="entry name" value="ABCF_EF-3"/>
    <property type="match status" value="2"/>
</dbReference>
<dbReference type="FunFam" id="3.40.50.300:FF:000104">
    <property type="entry name" value="ATP-binding cassette sub-family F member 3"/>
    <property type="match status" value="1"/>
</dbReference>
<dbReference type="FunFam" id="3.40.50.300:FF:000688">
    <property type="entry name" value="ATP-binding cassette sub-family F member 3"/>
    <property type="match status" value="1"/>
</dbReference>
<dbReference type="Gene3D" id="3.40.50.300">
    <property type="entry name" value="P-loop containing nucleotide triphosphate hydrolases"/>
    <property type="match status" value="2"/>
</dbReference>
<dbReference type="InterPro" id="IPR003593">
    <property type="entry name" value="AAA+_ATPase"/>
</dbReference>
<dbReference type="InterPro" id="IPR032781">
    <property type="entry name" value="ABC_tran_Xtn"/>
</dbReference>
<dbReference type="InterPro" id="IPR003439">
    <property type="entry name" value="ABC_transporter-like_ATP-bd"/>
</dbReference>
<dbReference type="InterPro" id="IPR017871">
    <property type="entry name" value="ABC_transporter-like_CS"/>
</dbReference>
<dbReference type="InterPro" id="IPR050611">
    <property type="entry name" value="ABCF_EF3_subfamily"/>
</dbReference>
<dbReference type="InterPro" id="IPR027417">
    <property type="entry name" value="P-loop_NTPase"/>
</dbReference>
<dbReference type="PANTHER" id="PTHR19211:SF117">
    <property type="entry name" value="ATP-BINDING CASSETTE SUB-FAMILY F MEMBER 3"/>
    <property type="match status" value="1"/>
</dbReference>
<dbReference type="PANTHER" id="PTHR19211">
    <property type="entry name" value="ATP-BINDING TRANSPORT PROTEIN-RELATED"/>
    <property type="match status" value="1"/>
</dbReference>
<dbReference type="Pfam" id="PF00005">
    <property type="entry name" value="ABC_tran"/>
    <property type="match status" value="2"/>
</dbReference>
<dbReference type="Pfam" id="PF12848">
    <property type="entry name" value="ABC_tran_Xtn"/>
    <property type="match status" value="1"/>
</dbReference>
<dbReference type="SMART" id="SM00382">
    <property type="entry name" value="AAA"/>
    <property type="match status" value="2"/>
</dbReference>
<dbReference type="SUPFAM" id="SSF52540">
    <property type="entry name" value="P-loop containing nucleoside triphosphate hydrolases"/>
    <property type="match status" value="2"/>
</dbReference>
<dbReference type="PROSITE" id="PS00211">
    <property type="entry name" value="ABC_TRANSPORTER_1"/>
    <property type="match status" value="2"/>
</dbReference>
<dbReference type="PROSITE" id="PS50893">
    <property type="entry name" value="ABC_TRANSPORTER_2"/>
    <property type="match status" value="2"/>
</dbReference>
<keyword id="KW-0007">Acetylation</keyword>
<keyword id="KW-0051">Antiviral defense</keyword>
<keyword id="KW-0067">ATP-binding</keyword>
<keyword id="KW-0547">Nucleotide-binding</keyword>
<keyword id="KW-0597">Phosphoprotein</keyword>
<keyword id="KW-1185">Reference proteome</keyword>
<keyword id="KW-0677">Repeat</keyword>
<evidence type="ECO:0000250" key="1">
    <source>
        <dbReference type="UniProtKB" id="Q9NUQ8"/>
    </source>
</evidence>
<evidence type="ECO:0000255" key="2">
    <source>
        <dbReference type="PROSITE-ProRule" id="PRU00434"/>
    </source>
</evidence>
<evidence type="ECO:0000256" key="3">
    <source>
        <dbReference type="SAM" id="MobiDB-lite"/>
    </source>
</evidence>
<evidence type="ECO:0000269" key="4">
    <source>
    </source>
</evidence>
<evidence type="ECO:0000305" key="5"/>
<reference key="1">
    <citation type="journal article" date="2004" name="Genome Res.">
        <title>The status, quality, and expansion of the NIH full-length cDNA project: the Mammalian Gene Collection (MGC).</title>
        <authorList>
            <consortium name="The MGC Project Team"/>
        </authorList>
    </citation>
    <scope>NUCLEOTIDE SEQUENCE [LARGE SCALE MRNA]</scope>
    <source>
        <strain>C57BL/6J</strain>
        <tissue>Mammary gland</tissue>
    </source>
</reference>
<reference key="2">
    <citation type="journal article" date="2000" name="Genomics">
        <title>Identification of 18 mouse ABC genes and characterization of the ABC superfamily in Mus musculus.</title>
        <authorList>
            <person name="Schriml L.M."/>
            <person name="Dean M."/>
        </authorList>
    </citation>
    <scope>NUCLEOTIDE SEQUENCE [MRNA] OF 589-709</scope>
    <source>
        <strain>CD-1</strain>
    </source>
</reference>
<reference key="3">
    <citation type="journal article" date="2010" name="Cell">
        <title>A tissue-specific atlas of mouse protein phosphorylation and expression.</title>
        <authorList>
            <person name="Huttlin E.L."/>
            <person name="Jedrychowski M.P."/>
            <person name="Elias J.E."/>
            <person name="Goswami T."/>
            <person name="Rad R."/>
            <person name="Beausoleil S.A."/>
            <person name="Villen J."/>
            <person name="Haas W."/>
            <person name="Sowa M.E."/>
            <person name="Gygi S.P."/>
        </authorList>
    </citation>
    <scope>IDENTIFICATION BY MASS SPECTROMETRY [LARGE SCALE ANALYSIS]</scope>
    <source>
        <tissue>Brain</tissue>
        <tissue>Brown adipose tissue</tissue>
        <tissue>Heart</tissue>
        <tissue>Kidney</tissue>
        <tissue>Liver</tissue>
        <tissue>Lung</tissue>
        <tissue>Pancreas</tissue>
        <tissue>Spleen</tissue>
        <tissue>Testis</tissue>
    </source>
</reference>
<reference key="4">
    <citation type="journal article" date="2012" name="J. Virol.">
        <title>Identification of novel host cell binding partners of Oas1b, the protein conferring resistance to flavivirus-induced disease in mice.</title>
        <authorList>
            <person name="Courtney S.C."/>
            <person name="Di H."/>
            <person name="Stockman B.M."/>
            <person name="Liu H."/>
            <person name="Scherbik S.V."/>
            <person name="Brinton M.A."/>
        </authorList>
    </citation>
    <scope>FUNCTION</scope>
    <scope>INTERACTION WITH OAS1B</scope>
</reference>
<comment type="function">
    <text evidence="4">Displays an antiviral effect against flaviviruses such as west Nile virus (WNV) in the presence of OAS1B.</text>
</comment>
<comment type="similarity">
    <text evidence="5">Belongs to the ABC transporter superfamily. ABCF family. EF3 subfamily.</text>
</comment>
<comment type="caution">
    <text evidence="5">Lacks transmembrane domains and is probably not involved in transport.</text>
</comment>
<comment type="sequence caution" evidence="5">
    <conflict type="frameshift">
        <sequence resource="EMBL-CDS" id="AAF31421"/>
    </conflict>
</comment>
<accession>Q8K268</accession>
<accession>Q9JL49</accession>
<protein>
    <recommendedName>
        <fullName>ATP-binding cassette sub-family F member 3</fullName>
    </recommendedName>
</protein>
<proteinExistence type="evidence at protein level"/>
<name>ABCF3_MOUSE</name>
<gene>
    <name type="primary">Abcf3</name>
</gene>
<sequence>MATCADILRSEFPEIDGQVFDYVTGVLHSGSADFESVDDLVEAVGELLQEVSGDSKDDAGIRAVCQRMYNTLRLAEPQNQGNSQVLLDAPIQLSKIMENYDCDTKLPGLLKREQSSTVNAKKLEKAEARLKAKQEKRSEKETLKTSNPLVLEEASASQAGSRKESRLESSGKNKSYDVRIENFDVSFGDRVLLAGADVNLAWGRRYGLVGRNGLGKTTLLKMLATRSLRVPAHISLLHVEQEVAGDDTPALQSVLESDTVREDLLRQERELSLRIAAGRAEGSEAAQLAEIYGKLEEIEADKAPARASVILAGLGFTPKMQQQPTREFSGGWRMRLALARALFARPDLLLLDEPTNMLDVRAILWLENYLQTWPSTILVVSHDRNFLNAIATDIIHLHSQRLDGYRGDFETFIKSKQERLLNQQREYEAQQQYRQHIQVFIDRFRYNANRASQVQSKLKMLEKLPELKPVDKESEVVLKFPDGFEKFSPPILQLDEVDFYYDPKHSIFSRLSVSADLESRICVVGENGAGKSTMLKLLMGDLSPVRGIRHAHRNLKIGYFSQHHVEQLDLNVSAVELLARKFPGLPEEEYRHQLGRYGISGELAMRPVASLSGGQKSRVAFAQMTMPCPNFYILDEPTNHLDMETIEALGQALNNFRGGVILVSHDERFIRLVCKELWVCENGSVTRVEGGFDQYRALLQEQFRREGFL</sequence>
<organism>
    <name type="scientific">Mus musculus</name>
    <name type="common">Mouse</name>
    <dbReference type="NCBI Taxonomy" id="10090"/>
    <lineage>
        <taxon>Eukaryota</taxon>
        <taxon>Metazoa</taxon>
        <taxon>Chordata</taxon>
        <taxon>Craniata</taxon>
        <taxon>Vertebrata</taxon>
        <taxon>Euteleostomi</taxon>
        <taxon>Mammalia</taxon>
        <taxon>Eutheria</taxon>
        <taxon>Euarchontoglires</taxon>
        <taxon>Glires</taxon>
        <taxon>Rodentia</taxon>
        <taxon>Myomorpha</taxon>
        <taxon>Muroidea</taxon>
        <taxon>Muridae</taxon>
        <taxon>Murinae</taxon>
        <taxon>Mus</taxon>
        <taxon>Mus</taxon>
    </lineage>
</organism>